<accession>A0QTT1</accession>
<accession>I7FZ62</accession>
<sequence>MSIAMTAPTTGVAPMTCETRLPAVPCHVGDPDLWFAENPGDLERAKALCAGCPIRVQCLTAALERQEPWGVWGGEILDRGSIVARKRPRGRPRKDSGGNPAAA</sequence>
<comment type="function">
    <text evidence="1 3">Acts as a transcriptional regulator. Probably redox-responsive. The apo- but not holo-form probably binds DNA (By similarity). Participates in maintaining a reduced cytoplasmic (MSH/MSSM) environment under normal growth conditions and directly or indirectly controls the concentration of mycothiol (MSH + MSSM).</text>
</comment>
<comment type="cofactor">
    <cofactor evidence="1">
        <name>[4Fe-4S] cluster</name>
        <dbReference type="ChEBI" id="CHEBI:49883"/>
    </cofactor>
    <text evidence="1">Binds 1 [4Fe-4S] cluster per subunit. Following nitrosylation of the [4Fe-4S] cluster binds 1 [4Fe-8(NO)] cluster per subunit.</text>
</comment>
<comment type="subcellular location">
    <subcellularLocation>
        <location evidence="1">Cytoplasm</location>
    </subcellularLocation>
</comment>
<comment type="induction">
    <text evidence="3">By a considerable number of antibiotics many of which perturb respiration, redox balance, or transmembrane ion flux, including erythromycin. Much stronger induction by erythromycin plus the reducing agent DTT but not erythromycin plus the oxidizing agent diamide. Positively regulates its own expression.</text>
</comment>
<comment type="PTM">
    <text evidence="1">The Fe-S cluster can be nitrosylated by nitric oxide (NO).</text>
</comment>
<comment type="PTM">
    <text evidence="1">Upon Fe-S cluster removal intramolecular disulfide bonds are formed.</text>
</comment>
<comment type="disruption phenotype">
    <text evidence="3">Not essential. Cells have a 5-X decrease in mycothiol reduced form (MSH)/ mycothiol oxidized disulfide form (MSSM), an indicator of a more oxidzed cytoplasm.</text>
</comment>
<comment type="similarity">
    <text evidence="4">Belongs to the WhiB family.</text>
</comment>
<comment type="sequence caution" evidence="4">
    <conflict type="erroneous initiation">
        <sequence resource="EMBL-CDS" id="AFP38382"/>
    </conflict>
    <text>Extended N-terminus.</text>
</comment>
<dbReference type="EMBL" id="CP000480">
    <property type="protein sequence ID" value="ABK72788.1"/>
    <property type="molecule type" value="Genomic_DNA"/>
</dbReference>
<dbReference type="EMBL" id="CP001663">
    <property type="protein sequence ID" value="AFP38382.1"/>
    <property type="status" value="ALT_INIT"/>
    <property type="molecule type" value="Genomic_DNA"/>
</dbReference>
<dbReference type="RefSeq" id="WP_003893333.1">
    <property type="nucleotide sequence ID" value="NZ_SIJM01000020.1"/>
</dbReference>
<dbReference type="RefSeq" id="YP_886319.1">
    <property type="nucleotide sequence ID" value="NC_008596.1"/>
</dbReference>
<dbReference type="SMR" id="A0QTT1"/>
<dbReference type="STRING" id="246196.MSMEG_1953"/>
<dbReference type="PaxDb" id="246196-MSMEI_1910"/>
<dbReference type="GeneID" id="93456761"/>
<dbReference type="KEGG" id="msb:LJ00_09750"/>
<dbReference type="KEGG" id="msg:MSMEI_1910"/>
<dbReference type="KEGG" id="msm:MSMEG_1953"/>
<dbReference type="PATRIC" id="fig|246196.19.peg.1931"/>
<dbReference type="eggNOG" id="ENOG5032RVG">
    <property type="taxonomic scope" value="Bacteria"/>
</dbReference>
<dbReference type="OrthoDB" id="5244115at2"/>
<dbReference type="Proteomes" id="UP000000757">
    <property type="component" value="Chromosome"/>
</dbReference>
<dbReference type="Proteomes" id="UP000006158">
    <property type="component" value="Chromosome"/>
</dbReference>
<dbReference type="GO" id="GO:0005737">
    <property type="term" value="C:cytoplasm"/>
    <property type="evidence" value="ECO:0007669"/>
    <property type="project" value="UniProtKB-SubCell"/>
</dbReference>
<dbReference type="GO" id="GO:0051539">
    <property type="term" value="F:4 iron, 4 sulfur cluster binding"/>
    <property type="evidence" value="ECO:0007669"/>
    <property type="project" value="UniProtKB-UniRule"/>
</dbReference>
<dbReference type="GO" id="GO:0035731">
    <property type="term" value="F:dinitrosyl-iron complex binding"/>
    <property type="evidence" value="ECO:0007669"/>
    <property type="project" value="UniProtKB-UniRule"/>
</dbReference>
<dbReference type="GO" id="GO:0003677">
    <property type="term" value="F:DNA binding"/>
    <property type="evidence" value="ECO:0007669"/>
    <property type="project" value="UniProtKB-UniRule"/>
</dbReference>
<dbReference type="GO" id="GO:0046872">
    <property type="term" value="F:metal ion binding"/>
    <property type="evidence" value="ECO:0007669"/>
    <property type="project" value="UniProtKB-KW"/>
</dbReference>
<dbReference type="GO" id="GO:0047134">
    <property type="term" value="F:protein-disulfide reductase [NAD(P)H] activity"/>
    <property type="evidence" value="ECO:0007669"/>
    <property type="project" value="TreeGrafter"/>
</dbReference>
<dbReference type="GO" id="GO:0045454">
    <property type="term" value="P:cell redox homeostasis"/>
    <property type="evidence" value="ECO:0007669"/>
    <property type="project" value="TreeGrafter"/>
</dbReference>
<dbReference type="GO" id="GO:0045892">
    <property type="term" value="P:negative regulation of DNA-templated transcription"/>
    <property type="evidence" value="ECO:0007669"/>
    <property type="project" value="TreeGrafter"/>
</dbReference>
<dbReference type="GO" id="GO:0046677">
    <property type="term" value="P:response to antibiotic"/>
    <property type="evidence" value="ECO:0007669"/>
    <property type="project" value="UniProtKB-KW"/>
</dbReference>
<dbReference type="HAMAP" id="MF_01479">
    <property type="entry name" value="WhiB"/>
    <property type="match status" value="1"/>
</dbReference>
<dbReference type="InterPro" id="IPR034768">
    <property type="entry name" value="4FE4S_WBL"/>
</dbReference>
<dbReference type="InterPro" id="IPR003482">
    <property type="entry name" value="Whib"/>
</dbReference>
<dbReference type="PANTHER" id="PTHR38839:SF2">
    <property type="entry name" value="TRANSCRIPTIONAL REGULATOR WHIB7-RELATED"/>
    <property type="match status" value="1"/>
</dbReference>
<dbReference type="PANTHER" id="PTHR38839">
    <property type="entry name" value="TRANSCRIPTIONAL REGULATOR WHID-RELATED"/>
    <property type="match status" value="1"/>
</dbReference>
<dbReference type="Pfam" id="PF02467">
    <property type="entry name" value="Whib"/>
    <property type="match status" value="1"/>
</dbReference>
<dbReference type="PROSITE" id="PS51674">
    <property type="entry name" value="4FE4S_WBL"/>
    <property type="match status" value="1"/>
</dbReference>
<organism>
    <name type="scientific">Mycolicibacterium smegmatis (strain ATCC 700084 / mc(2)155)</name>
    <name type="common">Mycobacterium smegmatis</name>
    <dbReference type="NCBI Taxonomy" id="246196"/>
    <lineage>
        <taxon>Bacteria</taxon>
        <taxon>Bacillati</taxon>
        <taxon>Actinomycetota</taxon>
        <taxon>Actinomycetes</taxon>
        <taxon>Mycobacteriales</taxon>
        <taxon>Mycobacteriaceae</taxon>
        <taxon>Mycolicibacterium</taxon>
    </lineage>
</organism>
<name>WHIB7_MYCS2</name>
<evidence type="ECO:0000250" key="1"/>
<evidence type="ECO:0000256" key="2">
    <source>
        <dbReference type="SAM" id="MobiDB-lite"/>
    </source>
</evidence>
<evidence type="ECO:0000269" key="3">
    <source>
    </source>
</evidence>
<evidence type="ECO:0000305" key="4"/>
<gene>
    <name type="primary">whiB7</name>
    <name type="ordered locus">MSMEG_1953</name>
    <name type="ordered locus">MSMEI_1910</name>
</gene>
<feature type="chain" id="PRO_0000420395" description="Transcriptional regulator WhiB7">
    <location>
        <begin position="1"/>
        <end position="103"/>
    </location>
</feature>
<feature type="domain" description="4Fe-4S Wbl-type">
    <location>
        <begin position="25"/>
        <end position="82"/>
    </location>
</feature>
<feature type="region of interest" description="Disordered" evidence="2">
    <location>
        <begin position="82"/>
        <end position="103"/>
    </location>
</feature>
<feature type="binding site" evidence="1">
    <location>
        <position position="17"/>
    </location>
    <ligand>
        <name>[4Fe-4S] cluster</name>
        <dbReference type="ChEBI" id="CHEBI:49883"/>
    </ligand>
</feature>
<feature type="binding site" evidence="1">
    <location>
        <position position="49"/>
    </location>
    <ligand>
        <name>[4Fe-4S] cluster</name>
        <dbReference type="ChEBI" id="CHEBI:49883"/>
    </ligand>
</feature>
<feature type="binding site" evidence="1">
    <location>
        <position position="52"/>
    </location>
    <ligand>
        <name>[4Fe-4S] cluster</name>
        <dbReference type="ChEBI" id="CHEBI:49883"/>
    </ligand>
</feature>
<feature type="binding site" evidence="1">
    <location>
        <position position="58"/>
    </location>
    <ligand>
        <name>[4Fe-4S] cluster</name>
        <dbReference type="ChEBI" id="CHEBI:49883"/>
    </ligand>
</feature>
<protein>
    <recommendedName>
        <fullName>Transcriptional regulator WhiB7</fullName>
    </recommendedName>
</protein>
<proteinExistence type="evidence at transcript level"/>
<reference key="1">
    <citation type="submission" date="2006-10" db="EMBL/GenBank/DDBJ databases">
        <authorList>
            <person name="Fleischmann R.D."/>
            <person name="Dodson R.J."/>
            <person name="Haft D.H."/>
            <person name="Merkel J.S."/>
            <person name="Nelson W.C."/>
            <person name="Fraser C.M."/>
        </authorList>
    </citation>
    <scope>NUCLEOTIDE SEQUENCE [LARGE SCALE GENOMIC DNA]</scope>
    <source>
        <strain>ATCC 700084 / mc(2)155</strain>
    </source>
</reference>
<reference key="2">
    <citation type="journal article" date="2007" name="Genome Biol.">
        <title>Interrupted coding sequences in Mycobacterium smegmatis: authentic mutations or sequencing errors?</title>
        <authorList>
            <person name="Deshayes C."/>
            <person name="Perrodou E."/>
            <person name="Gallien S."/>
            <person name="Euphrasie D."/>
            <person name="Schaeffer C."/>
            <person name="Van-Dorsselaer A."/>
            <person name="Poch O."/>
            <person name="Lecompte O."/>
            <person name="Reyrat J.-M."/>
        </authorList>
    </citation>
    <scope>NUCLEOTIDE SEQUENCE [LARGE SCALE GENOMIC DNA]</scope>
    <source>
        <strain>ATCC 700084 / mc(2)155</strain>
    </source>
</reference>
<reference key="3">
    <citation type="journal article" date="2009" name="Genome Res.">
        <title>Ortho-proteogenomics: multiple proteomes investigation through orthology and a new MS-based protocol.</title>
        <authorList>
            <person name="Gallien S."/>
            <person name="Perrodou E."/>
            <person name="Carapito C."/>
            <person name="Deshayes C."/>
            <person name="Reyrat J.-M."/>
            <person name="Van Dorsselaer A."/>
            <person name="Poch O."/>
            <person name="Schaeffer C."/>
            <person name="Lecompte O."/>
        </authorList>
    </citation>
    <scope>NUCLEOTIDE SEQUENCE [LARGE SCALE GENOMIC DNA]</scope>
    <source>
        <strain>ATCC 700084 / mc(2)155</strain>
    </source>
</reference>
<reference key="4">
    <citation type="journal article" date="2012" name="J. Biol. Chem.">
        <title>The mycobacterial transcriptional regulator whiB7 gene links redox homeostasis and intrinsic antibiotic resistance.</title>
        <authorList>
            <person name="Burian J."/>
            <person name="Ramon-Garcia S."/>
            <person name="Sweet G."/>
            <person name="Gomez-Velasco A."/>
            <person name="Av-Gay Y."/>
            <person name="Thompson C.J."/>
        </authorList>
    </citation>
    <scope>FUNCTION</scope>
    <scope>INDUCTION</scope>
    <scope>DISRUPTION PHENOTYPE</scope>
    <source>
        <strain>ATCC 700084 / mc(2)155</strain>
    </source>
</reference>
<keyword id="KW-0004">4Fe-4S</keyword>
<keyword id="KW-0046">Antibiotic resistance</keyword>
<keyword id="KW-0963">Cytoplasm</keyword>
<keyword id="KW-1015">Disulfide bond</keyword>
<keyword id="KW-0238">DNA-binding</keyword>
<keyword id="KW-0408">Iron</keyword>
<keyword id="KW-0411">Iron-sulfur</keyword>
<keyword id="KW-0479">Metal-binding</keyword>
<keyword id="KW-1185">Reference proteome</keyword>
<keyword id="KW-0804">Transcription</keyword>
<keyword id="KW-0805">Transcription regulation</keyword>